<dbReference type="EC" id="3.4.24.-" evidence="1"/>
<dbReference type="EMBL" id="CP000918">
    <property type="protein sequence ID" value="ACO16387.1"/>
    <property type="molecule type" value="Genomic_DNA"/>
</dbReference>
<dbReference type="RefSeq" id="WP_000895733.1">
    <property type="nucleotide sequence ID" value="NC_012468.1"/>
</dbReference>
<dbReference type="KEGG" id="snm:SP70585_1348"/>
<dbReference type="HOGENOM" id="CLU_042266_2_1_9"/>
<dbReference type="Proteomes" id="UP000002211">
    <property type="component" value="Chromosome"/>
</dbReference>
<dbReference type="GO" id="GO:0005886">
    <property type="term" value="C:plasma membrane"/>
    <property type="evidence" value="ECO:0007669"/>
    <property type="project" value="UniProtKB-SubCell"/>
</dbReference>
<dbReference type="GO" id="GO:0004222">
    <property type="term" value="F:metalloendopeptidase activity"/>
    <property type="evidence" value="ECO:0007669"/>
    <property type="project" value="UniProtKB-UniRule"/>
</dbReference>
<dbReference type="GO" id="GO:0008270">
    <property type="term" value="F:zinc ion binding"/>
    <property type="evidence" value="ECO:0007669"/>
    <property type="project" value="UniProtKB-UniRule"/>
</dbReference>
<dbReference type="GO" id="GO:0006508">
    <property type="term" value="P:proteolysis"/>
    <property type="evidence" value="ECO:0007669"/>
    <property type="project" value="UniProtKB-KW"/>
</dbReference>
<dbReference type="CDD" id="cd07340">
    <property type="entry name" value="M48B_Htpx_like"/>
    <property type="match status" value="1"/>
</dbReference>
<dbReference type="Gene3D" id="3.30.2010.10">
    <property type="entry name" value="Metalloproteases ('zincins'), catalytic domain"/>
    <property type="match status" value="1"/>
</dbReference>
<dbReference type="HAMAP" id="MF_00188">
    <property type="entry name" value="Pept_M48_protease_HtpX"/>
    <property type="match status" value="1"/>
</dbReference>
<dbReference type="InterPro" id="IPR050083">
    <property type="entry name" value="HtpX_protease"/>
</dbReference>
<dbReference type="InterPro" id="IPR022919">
    <property type="entry name" value="Pept_M48_protease_HtpX"/>
</dbReference>
<dbReference type="InterPro" id="IPR001915">
    <property type="entry name" value="Peptidase_M48"/>
</dbReference>
<dbReference type="NCBIfam" id="NF003425">
    <property type="entry name" value="PRK04897.1"/>
    <property type="match status" value="1"/>
</dbReference>
<dbReference type="PANTHER" id="PTHR43221">
    <property type="entry name" value="PROTEASE HTPX"/>
    <property type="match status" value="1"/>
</dbReference>
<dbReference type="PANTHER" id="PTHR43221:SF1">
    <property type="entry name" value="PROTEASE HTPX"/>
    <property type="match status" value="1"/>
</dbReference>
<dbReference type="Pfam" id="PF01435">
    <property type="entry name" value="Peptidase_M48"/>
    <property type="match status" value="1"/>
</dbReference>
<feature type="chain" id="PRO_1000124239" description="Protease HtpX homolog">
    <location>
        <begin position="1"/>
        <end position="299"/>
    </location>
</feature>
<feature type="transmembrane region" description="Helical" evidence="1">
    <location>
        <begin position="15"/>
        <end position="35"/>
    </location>
</feature>
<feature type="transmembrane region" description="Helical" evidence="1">
    <location>
        <begin position="39"/>
        <end position="59"/>
    </location>
</feature>
<feature type="transmembrane region" description="Helical" evidence="1">
    <location>
        <begin position="158"/>
        <end position="178"/>
    </location>
</feature>
<feature type="transmembrane region" description="Helical" evidence="1">
    <location>
        <begin position="198"/>
        <end position="218"/>
    </location>
</feature>
<feature type="active site" evidence="1">
    <location>
        <position position="144"/>
    </location>
</feature>
<feature type="binding site" evidence="1">
    <location>
        <position position="143"/>
    </location>
    <ligand>
        <name>Zn(2+)</name>
        <dbReference type="ChEBI" id="CHEBI:29105"/>
        <note>catalytic</note>
    </ligand>
</feature>
<feature type="binding site" evidence="1">
    <location>
        <position position="147"/>
    </location>
    <ligand>
        <name>Zn(2+)</name>
        <dbReference type="ChEBI" id="CHEBI:29105"/>
        <note>catalytic</note>
    </ligand>
</feature>
<feature type="binding site" evidence="1">
    <location>
        <position position="227"/>
    </location>
    <ligand>
        <name>Zn(2+)</name>
        <dbReference type="ChEBI" id="CHEBI:29105"/>
        <note>catalytic</note>
    </ligand>
</feature>
<sequence length="299" mass="32805">MLFDQIASNKRKTWILLLVFFLLLALVGYAVGYLFIRSGLGGLVIALIIGFIYALSMIFQSTEIVMSMNGAREVDEQTAPDLYHVVEDMALVAQIPMPRVFIIDDPALNAFATGSNPQNAAVAATSGLLAIMNREELEAVMGHEVSHIRNYDIRISTIAVALASAITMLSSMAGRMMWWGGAGRRRSDDDRDGNGLEIIMLVVSLLAIVLAPLAATLVQLAISRQREFLADASSVELTRNPQGMINALDKLDNSKPMSRHVDDASSALYINDPKKGGGFQKLFYTHPPISERIERLKHM</sequence>
<evidence type="ECO:0000255" key="1">
    <source>
        <dbReference type="HAMAP-Rule" id="MF_00188"/>
    </source>
</evidence>
<gene>
    <name evidence="1" type="primary">htpX</name>
    <name type="ordered locus">SP70585_1348</name>
</gene>
<name>HTPX_STRP7</name>
<reference key="1">
    <citation type="journal article" date="2010" name="Genome Biol.">
        <title>Structure and dynamics of the pan-genome of Streptococcus pneumoniae and closely related species.</title>
        <authorList>
            <person name="Donati C."/>
            <person name="Hiller N.L."/>
            <person name="Tettelin H."/>
            <person name="Muzzi A."/>
            <person name="Croucher N.J."/>
            <person name="Angiuoli S.V."/>
            <person name="Oggioni M."/>
            <person name="Dunning Hotopp J.C."/>
            <person name="Hu F.Z."/>
            <person name="Riley D.R."/>
            <person name="Covacci A."/>
            <person name="Mitchell T.J."/>
            <person name="Bentley S.D."/>
            <person name="Kilian M."/>
            <person name="Ehrlich G.D."/>
            <person name="Rappuoli R."/>
            <person name="Moxon E.R."/>
            <person name="Masignani V."/>
        </authorList>
    </citation>
    <scope>NUCLEOTIDE SEQUENCE [LARGE SCALE GENOMIC DNA]</scope>
    <source>
        <strain>70585</strain>
    </source>
</reference>
<accession>C1C7R3</accession>
<comment type="cofactor">
    <cofactor evidence="1">
        <name>Zn(2+)</name>
        <dbReference type="ChEBI" id="CHEBI:29105"/>
    </cofactor>
    <text evidence="1">Binds 1 zinc ion per subunit.</text>
</comment>
<comment type="subcellular location">
    <subcellularLocation>
        <location evidence="1">Cell membrane</location>
        <topology evidence="1">Multi-pass membrane protein</topology>
    </subcellularLocation>
</comment>
<comment type="similarity">
    <text evidence="1">Belongs to the peptidase M48B family.</text>
</comment>
<organism>
    <name type="scientific">Streptococcus pneumoniae (strain 70585)</name>
    <dbReference type="NCBI Taxonomy" id="488221"/>
    <lineage>
        <taxon>Bacteria</taxon>
        <taxon>Bacillati</taxon>
        <taxon>Bacillota</taxon>
        <taxon>Bacilli</taxon>
        <taxon>Lactobacillales</taxon>
        <taxon>Streptococcaceae</taxon>
        <taxon>Streptococcus</taxon>
    </lineage>
</organism>
<proteinExistence type="inferred from homology"/>
<protein>
    <recommendedName>
        <fullName evidence="1">Protease HtpX homolog</fullName>
        <ecNumber evidence="1">3.4.24.-</ecNumber>
    </recommendedName>
</protein>
<keyword id="KW-1003">Cell membrane</keyword>
<keyword id="KW-0378">Hydrolase</keyword>
<keyword id="KW-0472">Membrane</keyword>
<keyword id="KW-0479">Metal-binding</keyword>
<keyword id="KW-0482">Metalloprotease</keyword>
<keyword id="KW-0645">Protease</keyword>
<keyword id="KW-0812">Transmembrane</keyword>
<keyword id="KW-1133">Transmembrane helix</keyword>
<keyword id="KW-0862">Zinc</keyword>